<keyword id="KW-0067">ATP-binding</keyword>
<keyword id="KW-0963">Cytoplasm</keyword>
<keyword id="KW-0206">Cytoskeleton</keyword>
<keyword id="KW-0418">Kinase</keyword>
<keyword id="KW-0547">Nucleotide-binding</keyword>
<keyword id="KW-0539">Nucleus</keyword>
<keyword id="KW-0597">Phosphoprotein</keyword>
<keyword id="KW-1185">Reference proteome</keyword>
<keyword id="KW-0723">Serine/threonine-protein kinase</keyword>
<keyword id="KW-0808">Transferase</keyword>
<dbReference type="EC" id="2.7.11.1"/>
<dbReference type="EMBL" id="CU329671">
    <property type="protein sequence ID" value="CAB39805.3"/>
    <property type="molecule type" value="Genomic_DNA"/>
</dbReference>
<dbReference type="PIR" id="T40486">
    <property type="entry name" value="T40486"/>
</dbReference>
<dbReference type="RefSeq" id="XP_001713142.2">
    <property type="nucleotide sequence ID" value="XM_001713090.2"/>
</dbReference>
<dbReference type="SMR" id="Q9Y7J6"/>
<dbReference type="BioGRID" id="276357">
    <property type="interactions" value="60"/>
</dbReference>
<dbReference type="FunCoup" id="Q9Y7J6">
    <property type="interactions" value="105"/>
</dbReference>
<dbReference type="STRING" id="284812.Q9Y7J6"/>
<dbReference type="iPTMnet" id="Q9Y7J6"/>
<dbReference type="PaxDb" id="4896-SPBC1778.10c.1"/>
<dbReference type="EnsemblFungi" id="SPBC1778.10c.1">
    <property type="protein sequence ID" value="SPBC1778.10c.1:pep"/>
    <property type="gene ID" value="SPBC1778.10c"/>
</dbReference>
<dbReference type="PomBase" id="SPBC1778.10c">
    <property type="gene designation" value="ppk21"/>
</dbReference>
<dbReference type="VEuPathDB" id="FungiDB:SPBC1778.10c"/>
<dbReference type="eggNOG" id="KOG0592">
    <property type="taxonomic scope" value="Eukaryota"/>
</dbReference>
<dbReference type="HOGENOM" id="CLU_000288_63_9_1"/>
<dbReference type="InParanoid" id="Q9Y7J6"/>
<dbReference type="OMA" id="FACVVYQ"/>
<dbReference type="CD-CODE" id="576F0A76">
    <property type="entry name" value="Centrosome"/>
</dbReference>
<dbReference type="PRO" id="PR:Q9Y7J6"/>
<dbReference type="Proteomes" id="UP000002485">
    <property type="component" value="Chromosome II"/>
</dbReference>
<dbReference type="GO" id="GO:0032153">
    <property type="term" value="C:cell division site"/>
    <property type="evidence" value="ECO:0007005"/>
    <property type="project" value="PomBase"/>
</dbReference>
<dbReference type="GO" id="GO:0051286">
    <property type="term" value="C:cell tip"/>
    <property type="evidence" value="ECO:0007005"/>
    <property type="project" value="PomBase"/>
</dbReference>
<dbReference type="GO" id="GO:0005829">
    <property type="term" value="C:cytosol"/>
    <property type="evidence" value="ECO:0007005"/>
    <property type="project" value="PomBase"/>
</dbReference>
<dbReference type="GO" id="GO:0071341">
    <property type="term" value="C:medial cortical node"/>
    <property type="evidence" value="ECO:0000314"/>
    <property type="project" value="PomBase"/>
</dbReference>
<dbReference type="GO" id="GO:0044732">
    <property type="term" value="C:mitotic spindle pole body"/>
    <property type="evidence" value="ECO:0000314"/>
    <property type="project" value="PomBase"/>
</dbReference>
<dbReference type="GO" id="GO:0005634">
    <property type="term" value="C:nucleus"/>
    <property type="evidence" value="ECO:0007005"/>
    <property type="project" value="PomBase"/>
</dbReference>
<dbReference type="GO" id="GO:0005524">
    <property type="term" value="F:ATP binding"/>
    <property type="evidence" value="ECO:0000255"/>
    <property type="project" value="PomBase"/>
</dbReference>
<dbReference type="GO" id="GO:0106310">
    <property type="term" value="F:protein serine kinase activity"/>
    <property type="evidence" value="ECO:0007669"/>
    <property type="project" value="RHEA"/>
</dbReference>
<dbReference type="GO" id="GO:0004674">
    <property type="term" value="F:protein serine/threonine kinase activity"/>
    <property type="evidence" value="ECO:0000318"/>
    <property type="project" value="GO_Central"/>
</dbReference>
<dbReference type="GO" id="GO:0035556">
    <property type="term" value="P:intracellular signal transduction"/>
    <property type="evidence" value="ECO:0000318"/>
    <property type="project" value="GO_Central"/>
</dbReference>
<dbReference type="GO" id="GO:1902425">
    <property type="term" value="P:positive regulation of attachment of mitotic spindle microtubules to kinetochore"/>
    <property type="evidence" value="ECO:0000315"/>
    <property type="project" value="PomBase"/>
</dbReference>
<dbReference type="GO" id="GO:0140281">
    <property type="term" value="P:positive regulation of mitotic division septum assembly"/>
    <property type="evidence" value="ECO:0000315"/>
    <property type="project" value="PomBase"/>
</dbReference>
<dbReference type="GO" id="GO:0090520">
    <property type="term" value="P:sphingolipid mediated signaling pathway"/>
    <property type="evidence" value="ECO:0000266"/>
    <property type="project" value="PomBase"/>
</dbReference>
<dbReference type="CDD" id="cd05581">
    <property type="entry name" value="STKc_PDK1"/>
    <property type="match status" value="1"/>
</dbReference>
<dbReference type="FunFam" id="1.10.510.10:FF:001419">
    <property type="entry name" value="3-phosphoinositide-dependent protein kinase"/>
    <property type="match status" value="1"/>
</dbReference>
<dbReference type="FunFam" id="3.30.200.20:FF:001214">
    <property type="entry name" value="Serine/threonine-protein kinase ppk21"/>
    <property type="match status" value="1"/>
</dbReference>
<dbReference type="Gene3D" id="3.30.200.20">
    <property type="entry name" value="Phosphorylase Kinase, domain 1"/>
    <property type="match status" value="1"/>
</dbReference>
<dbReference type="Gene3D" id="1.10.510.10">
    <property type="entry name" value="Transferase(Phosphotransferase) domain 1"/>
    <property type="match status" value="1"/>
</dbReference>
<dbReference type="InterPro" id="IPR011009">
    <property type="entry name" value="Kinase-like_dom_sf"/>
</dbReference>
<dbReference type="InterPro" id="IPR039046">
    <property type="entry name" value="PDPK1"/>
</dbReference>
<dbReference type="InterPro" id="IPR000719">
    <property type="entry name" value="Prot_kinase_dom"/>
</dbReference>
<dbReference type="InterPro" id="IPR017441">
    <property type="entry name" value="Protein_kinase_ATP_BS"/>
</dbReference>
<dbReference type="InterPro" id="IPR008271">
    <property type="entry name" value="Ser/Thr_kinase_AS"/>
</dbReference>
<dbReference type="InterPro" id="IPR050236">
    <property type="entry name" value="Ser_Thr_kinase_AGC"/>
</dbReference>
<dbReference type="PANTHER" id="PTHR24356">
    <property type="entry name" value="SERINE/THREONINE-PROTEIN KINASE"/>
    <property type="match status" value="1"/>
</dbReference>
<dbReference type="PANTHER" id="PTHR24356:SF411">
    <property type="entry name" value="SERINE_THREONINE-PROTEIN KINASE PPK21"/>
    <property type="match status" value="1"/>
</dbReference>
<dbReference type="Pfam" id="PF00069">
    <property type="entry name" value="Pkinase"/>
    <property type="match status" value="1"/>
</dbReference>
<dbReference type="SMART" id="SM00220">
    <property type="entry name" value="S_TKc"/>
    <property type="match status" value="1"/>
</dbReference>
<dbReference type="SUPFAM" id="SSF56112">
    <property type="entry name" value="Protein kinase-like (PK-like)"/>
    <property type="match status" value="1"/>
</dbReference>
<dbReference type="PROSITE" id="PS00107">
    <property type="entry name" value="PROTEIN_KINASE_ATP"/>
    <property type="match status" value="1"/>
</dbReference>
<dbReference type="PROSITE" id="PS50011">
    <property type="entry name" value="PROTEIN_KINASE_DOM"/>
    <property type="match status" value="1"/>
</dbReference>
<dbReference type="PROSITE" id="PS00108">
    <property type="entry name" value="PROTEIN_KINASE_ST"/>
    <property type="match status" value="1"/>
</dbReference>
<organism>
    <name type="scientific">Schizosaccharomyces pombe (strain 972 / ATCC 24843)</name>
    <name type="common">Fission yeast</name>
    <dbReference type="NCBI Taxonomy" id="284812"/>
    <lineage>
        <taxon>Eukaryota</taxon>
        <taxon>Fungi</taxon>
        <taxon>Dikarya</taxon>
        <taxon>Ascomycota</taxon>
        <taxon>Taphrinomycotina</taxon>
        <taxon>Schizosaccharomycetes</taxon>
        <taxon>Schizosaccharomycetales</taxon>
        <taxon>Schizosaccharomycetaceae</taxon>
        <taxon>Schizosaccharomyces</taxon>
    </lineage>
</organism>
<accession>Q9Y7J6</accession>
<accession>O43064</accession>
<comment type="catalytic activity">
    <reaction>
        <text>L-seryl-[protein] + ATP = O-phospho-L-seryl-[protein] + ADP + H(+)</text>
        <dbReference type="Rhea" id="RHEA:17989"/>
        <dbReference type="Rhea" id="RHEA-COMP:9863"/>
        <dbReference type="Rhea" id="RHEA-COMP:11604"/>
        <dbReference type="ChEBI" id="CHEBI:15378"/>
        <dbReference type="ChEBI" id="CHEBI:29999"/>
        <dbReference type="ChEBI" id="CHEBI:30616"/>
        <dbReference type="ChEBI" id="CHEBI:83421"/>
        <dbReference type="ChEBI" id="CHEBI:456216"/>
        <dbReference type="EC" id="2.7.11.1"/>
    </reaction>
</comment>
<comment type="catalytic activity">
    <reaction>
        <text>L-threonyl-[protein] + ATP = O-phospho-L-threonyl-[protein] + ADP + H(+)</text>
        <dbReference type="Rhea" id="RHEA:46608"/>
        <dbReference type="Rhea" id="RHEA-COMP:11060"/>
        <dbReference type="Rhea" id="RHEA-COMP:11605"/>
        <dbReference type="ChEBI" id="CHEBI:15378"/>
        <dbReference type="ChEBI" id="CHEBI:30013"/>
        <dbReference type="ChEBI" id="CHEBI:30616"/>
        <dbReference type="ChEBI" id="CHEBI:61977"/>
        <dbReference type="ChEBI" id="CHEBI:456216"/>
        <dbReference type="EC" id="2.7.11.1"/>
    </reaction>
</comment>
<comment type="subcellular location">
    <subcellularLocation>
        <location evidence="6">Cytoplasm</location>
    </subcellularLocation>
    <subcellularLocation>
        <location evidence="6">Nucleus</location>
    </subcellularLocation>
    <subcellularLocation>
        <location evidence="6">Cytoplasm</location>
        <location evidence="6">Cytoskeleton</location>
        <location evidence="6">Microtubule organizing center</location>
        <location evidence="6">Spindle pole body</location>
    </subcellularLocation>
    <text>Located at the cell tips and septum.</text>
</comment>
<comment type="domain">
    <text evidence="2">The PIF-pocket is a small lobe in the catalytic domain required by the enzyme for the binding to the hydrophobic motif of its substrates. It is an allosteric regulatory site that can accommodate small compounds acting as allosteric inhibitors.</text>
</comment>
<comment type="similarity">
    <text evidence="8">Belongs to the protein kinase superfamily. AGC Ser/Thr protein kinase family. PDPK1 subfamily.</text>
</comment>
<evidence type="ECO:0000250" key="1"/>
<evidence type="ECO:0000250" key="2">
    <source>
        <dbReference type="UniProtKB" id="O15530"/>
    </source>
</evidence>
<evidence type="ECO:0000255" key="3">
    <source>
        <dbReference type="PROSITE-ProRule" id="PRU00159"/>
    </source>
</evidence>
<evidence type="ECO:0000255" key="4">
    <source>
        <dbReference type="PROSITE-ProRule" id="PRU10027"/>
    </source>
</evidence>
<evidence type="ECO:0000256" key="5">
    <source>
        <dbReference type="SAM" id="MobiDB-lite"/>
    </source>
</evidence>
<evidence type="ECO:0000269" key="6">
    <source>
    </source>
</evidence>
<evidence type="ECO:0000269" key="7">
    <source>
    </source>
</evidence>
<evidence type="ECO:0000305" key="8"/>
<gene>
    <name type="primary">ppk21</name>
    <name type="ORF">SPBC1778.10c</name>
    <name type="ORF">SPBC4C3.11</name>
</gene>
<feature type="chain" id="PRO_0000086157" description="Serine/threonine-protein kinase ppk21">
    <location>
        <begin position="1"/>
        <end position="551"/>
    </location>
</feature>
<feature type="domain" description="Protein kinase" evidence="3">
    <location>
        <begin position="55"/>
        <end position="315"/>
    </location>
</feature>
<feature type="region of interest" description="Disordered" evidence="5">
    <location>
        <begin position="24"/>
        <end position="43"/>
    </location>
</feature>
<feature type="region of interest" description="PIF-pocket" evidence="2">
    <location>
        <begin position="86"/>
        <end position="131"/>
    </location>
</feature>
<feature type="active site" description="Proton acceptor" evidence="3 4">
    <location>
        <position position="179"/>
    </location>
</feature>
<feature type="binding site" evidence="2">
    <location>
        <begin position="65"/>
        <end position="67"/>
    </location>
    <ligand>
        <name>ATP</name>
        <dbReference type="ChEBI" id="CHEBI:30616"/>
    </ligand>
</feature>
<feature type="binding site" evidence="2">
    <location>
        <position position="84"/>
    </location>
    <ligand>
        <name>ATP</name>
        <dbReference type="ChEBI" id="CHEBI:30616"/>
    </ligand>
</feature>
<feature type="binding site" evidence="2">
    <location>
        <begin position="134"/>
        <end position="136"/>
    </location>
    <ligand>
        <name>ATP</name>
        <dbReference type="ChEBI" id="CHEBI:30616"/>
    </ligand>
</feature>
<feature type="binding site" evidence="2">
    <location>
        <position position="140"/>
    </location>
    <ligand>
        <name>ATP</name>
        <dbReference type="ChEBI" id="CHEBI:30616"/>
    </ligand>
</feature>
<feature type="binding site" evidence="2">
    <location>
        <position position="183"/>
    </location>
    <ligand>
        <name>ATP</name>
        <dbReference type="ChEBI" id="CHEBI:30616"/>
    </ligand>
</feature>
<feature type="binding site" evidence="2">
    <location>
        <position position="197"/>
    </location>
    <ligand>
        <name>ATP</name>
        <dbReference type="ChEBI" id="CHEBI:30616"/>
    </ligand>
</feature>
<feature type="modified residue" description="Phosphoserine; by autocatalysis" evidence="1">
    <location>
        <position position="220"/>
    </location>
</feature>
<feature type="modified residue" description="Phosphoserine" evidence="7">
    <location>
        <position position="538"/>
    </location>
</feature>
<sequence length="551" mass="62716">MMDLEHKRISRSTLPDYADPDYFEARGERNPVKPQSSNVVPGTSHIGSIKSPADYVFGDIIGDGSFSKVRRATDKKSWKEYAIKVLDKKYIVKENKVKYVNIERDSMMRLNGFPGISRLFHTFQDDLKLYYVLELAPNGELLQYIKKYRFLDENCVRFYAAEILSSIEYMHSCGIIHRDLKPENILFDGNMHVKITDFGTAKILPPKYVNSPDYTTFPSSFVGTAEYVAPELLSRQVVSKSSDLWAFACVVYQMIVGSPPFHGSNPNNIFKKIMSLEYELPKLLPPDIVPLFSHLFRIQPSDRSTTQQIKQFPFFATITWDNLWTQDPPPMQSFRPNYNIAIPNAPAYYRSNVTAAAAANAAAAFASASIVKHQETARRQELPTVNRFTAPTAHYGYASLRSHQMPVDRLYYKLVPSSESIIESTSVFVSPIPSVPEGNKFPSGLSKMFLKRKQRVMLLTDVGRCAFVCKGKHERLFIEMEVNLKDSSVVVIFDENSSKRFLIEDKVQSWIIEDSSGDVTKYKDKILKFADVASSHQSRSSEENVEENEEE</sequence>
<reference key="1">
    <citation type="journal article" date="2002" name="Nature">
        <title>The genome sequence of Schizosaccharomyces pombe.</title>
        <authorList>
            <person name="Wood V."/>
            <person name="Gwilliam R."/>
            <person name="Rajandream M.A."/>
            <person name="Lyne M.H."/>
            <person name="Lyne R."/>
            <person name="Stewart A."/>
            <person name="Sgouros J.G."/>
            <person name="Peat N."/>
            <person name="Hayles J."/>
            <person name="Baker S.G."/>
            <person name="Basham D."/>
            <person name="Bowman S."/>
            <person name="Brooks K."/>
            <person name="Brown D."/>
            <person name="Brown S."/>
            <person name="Chillingworth T."/>
            <person name="Churcher C.M."/>
            <person name="Collins M."/>
            <person name="Connor R."/>
            <person name="Cronin A."/>
            <person name="Davis P."/>
            <person name="Feltwell T."/>
            <person name="Fraser A."/>
            <person name="Gentles S."/>
            <person name="Goble A."/>
            <person name="Hamlin N."/>
            <person name="Harris D.E."/>
            <person name="Hidalgo J."/>
            <person name="Hodgson G."/>
            <person name="Holroyd S."/>
            <person name="Hornsby T."/>
            <person name="Howarth S."/>
            <person name="Huckle E.J."/>
            <person name="Hunt S."/>
            <person name="Jagels K."/>
            <person name="James K.D."/>
            <person name="Jones L."/>
            <person name="Jones M."/>
            <person name="Leather S."/>
            <person name="McDonald S."/>
            <person name="McLean J."/>
            <person name="Mooney P."/>
            <person name="Moule S."/>
            <person name="Mungall K.L."/>
            <person name="Murphy L.D."/>
            <person name="Niblett D."/>
            <person name="Odell C."/>
            <person name="Oliver K."/>
            <person name="O'Neil S."/>
            <person name="Pearson D."/>
            <person name="Quail M.A."/>
            <person name="Rabbinowitsch E."/>
            <person name="Rutherford K.M."/>
            <person name="Rutter S."/>
            <person name="Saunders D."/>
            <person name="Seeger K."/>
            <person name="Sharp S."/>
            <person name="Skelton J."/>
            <person name="Simmonds M.N."/>
            <person name="Squares R."/>
            <person name="Squares S."/>
            <person name="Stevens K."/>
            <person name="Taylor K."/>
            <person name="Taylor R.G."/>
            <person name="Tivey A."/>
            <person name="Walsh S.V."/>
            <person name="Warren T."/>
            <person name="Whitehead S."/>
            <person name="Woodward J.R."/>
            <person name="Volckaert G."/>
            <person name="Aert R."/>
            <person name="Robben J."/>
            <person name="Grymonprez B."/>
            <person name="Weltjens I."/>
            <person name="Vanstreels E."/>
            <person name="Rieger M."/>
            <person name="Schaefer M."/>
            <person name="Mueller-Auer S."/>
            <person name="Gabel C."/>
            <person name="Fuchs M."/>
            <person name="Duesterhoeft A."/>
            <person name="Fritzc C."/>
            <person name="Holzer E."/>
            <person name="Moestl D."/>
            <person name="Hilbert H."/>
            <person name="Borzym K."/>
            <person name="Langer I."/>
            <person name="Beck A."/>
            <person name="Lehrach H."/>
            <person name="Reinhardt R."/>
            <person name="Pohl T.M."/>
            <person name="Eger P."/>
            <person name="Zimmermann W."/>
            <person name="Wedler H."/>
            <person name="Wambutt R."/>
            <person name="Purnelle B."/>
            <person name="Goffeau A."/>
            <person name="Cadieu E."/>
            <person name="Dreano S."/>
            <person name="Gloux S."/>
            <person name="Lelaure V."/>
            <person name="Mottier S."/>
            <person name="Galibert F."/>
            <person name="Aves S.J."/>
            <person name="Xiang Z."/>
            <person name="Hunt C."/>
            <person name="Moore K."/>
            <person name="Hurst S.M."/>
            <person name="Lucas M."/>
            <person name="Rochet M."/>
            <person name="Gaillardin C."/>
            <person name="Tallada V.A."/>
            <person name="Garzon A."/>
            <person name="Thode G."/>
            <person name="Daga R.R."/>
            <person name="Cruzado L."/>
            <person name="Jimenez J."/>
            <person name="Sanchez M."/>
            <person name="del Rey F."/>
            <person name="Benito J."/>
            <person name="Dominguez A."/>
            <person name="Revuelta J.L."/>
            <person name="Moreno S."/>
            <person name="Armstrong J."/>
            <person name="Forsburg S.L."/>
            <person name="Cerutti L."/>
            <person name="Lowe T."/>
            <person name="McCombie W.R."/>
            <person name="Paulsen I."/>
            <person name="Potashkin J."/>
            <person name="Shpakovski G.V."/>
            <person name="Ussery D."/>
            <person name="Barrell B.G."/>
            <person name="Nurse P."/>
        </authorList>
    </citation>
    <scope>NUCLEOTIDE SEQUENCE [LARGE SCALE GENOMIC DNA]</scope>
    <source>
        <strain>972 / ATCC 24843</strain>
    </source>
</reference>
<reference key="2">
    <citation type="journal article" date="2011" name="Science">
        <title>Comparative functional genomics of the fission yeasts.</title>
        <authorList>
            <person name="Rhind N."/>
            <person name="Chen Z."/>
            <person name="Yassour M."/>
            <person name="Thompson D.A."/>
            <person name="Haas B.J."/>
            <person name="Habib N."/>
            <person name="Wapinski I."/>
            <person name="Roy S."/>
            <person name="Lin M.F."/>
            <person name="Heiman D.I."/>
            <person name="Young S.K."/>
            <person name="Furuya K."/>
            <person name="Guo Y."/>
            <person name="Pidoux A."/>
            <person name="Chen H.M."/>
            <person name="Robbertse B."/>
            <person name="Goldberg J.M."/>
            <person name="Aoki K."/>
            <person name="Bayne E.H."/>
            <person name="Berlin A.M."/>
            <person name="Desjardins C.A."/>
            <person name="Dobbs E."/>
            <person name="Dukaj L."/>
            <person name="Fan L."/>
            <person name="FitzGerald M.G."/>
            <person name="French C."/>
            <person name="Gujja S."/>
            <person name="Hansen K."/>
            <person name="Keifenheim D."/>
            <person name="Levin J.Z."/>
            <person name="Mosher R.A."/>
            <person name="Mueller C.A."/>
            <person name="Pfiffner J."/>
            <person name="Priest M."/>
            <person name="Russ C."/>
            <person name="Smialowska A."/>
            <person name="Swoboda P."/>
            <person name="Sykes S.M."/>
            <person name="Vaughn M."/>
            <person name="Vengrova S."/>
            <person name="Yoder R."/>
            <person name="Zeng Q."/>
            <person name="Allshire R."/>
            <person name="Baulcombe D."/>
            <person name="Birren B.W."/>
            <person name="Brown W."/>
            <person name="Ekwall K."/>
            <person name="Kellis M."/>
            <person name="Leatherwood J."/>
            <person name="Levin H."/>
            <person name="Margalit H."/>
            <person name="Martienssen R."/>
            <person name="Nieduszynski C.A."/>
            <person name="Spatafora J.W."/>
            <person name="Friedman N."/>
            <person name="Dalgaard J.Z."/>
            <person name="Baumann P."/>
            <person name="Niki H."/>
            <person name="Regev A."/>
            <person name="Nusbaum C."/>
        </authorList>
    </citation>
    <scope>REVISION OF GENE MODEL</scope>
</reference>
<reference key="3">
    <citation type="journal article" date="2005" name="Eukaryot. Cell">
        <title>Systematic deletion analysis of fission yeast protein kinases.</title>
        <authorList>
            <person name="Bimbo A."/>
            <person name="Jia Y."/>
            <person name="Poh S.L."/>
            <person name="Karuturi R.K.M."/>
            <person name="den Elzen N."/>
            <person name="Peng X."/>
            <person name="Zheng L."/>
            <person name="O'Connell M."/>
            <person name="Liu E.T."/>
            <person name="Balasubramanian M.K."/>
            <person name="Liu J."/>
        </authorList>
    </citation>
    <scope>IDENTIFICATION</scope>
</reference>
<reference key="4">
    <citation type="journal article" date="2006" name="Nat. Biotechnol.">
        <title>ORFeome cloning and global analysis of protein localization in the fission yeast Schizosaccharomyces pombe.</title>
        <authorList>
            <person name="Matsuyama A."/>
            <person name="Arai R."/>
            <person name="Yashiroda Y."/>
            <person name="Shirai A."/>
            <person name="Kamata A."/>
            <person name="Sekido S."/>
            <person name="Kobayashi Y."/>
            <person name="Hashimoto A."/>
            <person name="Hamamoto M."/>
            <person name="Hiraoka Y."/>
            <person name="Horinouchi S."/>
            <person name="Yoshida M."/>
        </authorList>
    </citation>
    <scope>SUBCELLULAR LOCATION [LARGE SCALE ANALYSIS]</scope>
</reference>
<reference key="5">
    <citation type="journal article" date="2008" name="J. Proteome Res.">
        <title>Phosphoproteome analysis of fission yeast.</title>
        <authorList>
            <person name="Wilson-Grady J.T."/>
            <person name="Villen J."/>
            <person name="Gygi S.P."/>
        </authorList>
    </citation>
    <scope>PHOSPHORYLATION [LARGE SCALE ANALYSIS] AT SER-538</scope>
    <scope>IDENTIFICATION BY MASS SPECTROMETRY</scope>
</reference>
<proteinExistence type="evidence at protein level"/>
<name>PPK21_SCHPO</name>
<protein>
    <recommendedName>
        <fullName>Serine/threonine-protein kinase ppk21</fullName>
        <ecNumber>2.7.11.1</ecNumber>
    </recommendedName>
</protein>